<sequence length="251" mass="27691">MGSKLTCCLGPSGGLNCDCCRPDVGPCHECEIPETVAATAPASTTAKPAKLDLKAKKAQLMQYLSLPKTPKMLKMSKGLDARSKRWLKIIWRRHGIWPLENIGPTEDVQASAHGGVEENMTSDIEIPEAKHDHRPTEDVQVSAHGGVEENITSDIEISEAKHDHHLVEDLSESLSVCLEDFMTSDLSESLSVSLEDFMTSGLSESLSVSLEDLMTPEMAKERYEDYLCWVKMARSRLNEPISSQVLGLLRL</sequence>
<name>CV042_HUMAN</name>
<dbReference type="EMBL" id="CR456485">
    <property type="protein sequence ID" value="CAG30371.1"/>
    <property type="molecule type" value="mRNA"/>
</dbReference>
<dbReference type="EMBL" id="Z83839">
    <property type="status" value="NOT_ANNOTATED_CDS"/>
    <property type="molecule type" value="Genomic_DNA"/>
</dbReference>
<dbReference type="EMBL" id="AL008723">
    <property type="status" value="NOT_ANNOTATED_CDS"/>
    <property type="molecule type" value="Genomic_DNA"/>
</dbReference>
<dbReference type="EMBL" id="CH471095">
    <property type="protein sequence ID" value="EAW60008.1"/>
    <property type="molecule type" value="Genomic_DNA"/>
</dbReference>
<dbReference type="CCDS" id="CCDS33639.1"/>
<dbReference type="RefSeq" id="NP_001010859.1">
    <property type="nucleotide sequence ID" value="NM_001010859.3"/>
</dbReference>
<dbReference type="BioGRID" id="127282">
    <property type="interactions" value="17"/>
</dbReference>
<dbReference type="FunCoup" id="Q6IC83">
    <property type="interactions" value="1"/>
</dbReference>
<dbReference type="IntAct" id="Q6IC83">
    <property type="interactions" value="11"/>
</dbReference>
<dbReference type="STRING" id="9606.ENSP00000371529"/>
<dbReference type="GlyGen" id="Q6IC83">
    <property type="glycosylation" value="2 sites, 1 O-linked glycan (1 site)"/>
</dbReference>
<dbReference type="iPTMnet" id="Q6IC83"/>
<dbReference type="PhosphoSitePlus" id="Q6IC83"/>
<dbReference type="BioMuta" id="C22orf42"/>
<dbReference type="DMDM" id="74757715"/>
<dbReference type="jPOST" id="Q6IC83"/>
<dbReference type="MassIVE" id="Q6IC83"/>
<dbReference type="PaxDb" id="9606-ENSP00000371529"/>
<dbReference type="Antibodypedia" id="11222">
    <property type="antibodies" value="12 antibodies from 8 providers"/>
</dbReference>
<dbReference type="DNASU" id="150297"/>
<dbReference type="Ensembl" id="ENST00000382097.4">
    <property type="protein sequence ID" value="ENSP00000371529.3"/>
    <property type="gene ID" value="ENSG00000205856.4"/>
</dbReference>
<dbReference type="GeneID" id="150297"/>
<dbReference type="KEGG" id="hsa:150297"/>
<dbReference type="MANE-Select" id="ENST00000382097.4">
    <property type="protein sequence ID" value="ENSP00000371529.3"/>
    <property type="RefSeq nucleotide sequence ID" value="NM_001010859.3"/>
    <property type="RefSeq protein sequence ID" value="NP_001010859.1"/>
</dbReference>
<dbReference type="UCSC" id="uc003amd.4">
    <property type="organism name" value="human"/>
</dbReference>
<dbReference type="AGR" id="HGNC:27160"/>
<dbReference type="CTD" id="150297"/>
<dbReference type="DisGeNET" id="150297"/>
<dbReference type="GeneCards" id="C22orf42"/>
<dbReference type="HGNC" id="HGNC:27160">
    <property type="gene designation" value="C22orf42"/>
</dbReference>
<dbReference type="HPA" id="ENSG00000205856">
    <property type="expression patterns" value="Group enriched (brain, testis)"/>
</dbReference>
<dbReference type="neXtProt" id="NX_Q6IC83"/>
<dbReference type="OpenTargets" id="ENSG00000205856"/>
<dbReference type="PharmGKB" id="PA164717091"/>
<dbReference type="VEuPathDB" id="HostDB:ENSG00000205856"/>
<dbReference type="eggNOG" id="ENOG502TEFW">
    <property type="taxonomic scope" value="Eukaryota"/>
</dbReference>
<dbReference type="GeneTree" id="ENSGT00520000056310"/>
<dbReference type="HOGENOM" id="CLU_1085708_0_0_1"/>
<dbReference type="InParanoid" id="Q6IC83"/>
<dbReference type="OMA" id="DYLCWVK"/>
<dbReference type="OrthoDB" id="9541489at2759"/>
<dbReference type="PAN-GO" id="Q6IC83">
    <property type="GO annotations" value="0 GO annotations based on evolutionary models"/>
</dbReference>
<dbReference type="PhylomeDB" id="Q6IC83"/>
<dbReference type="TreeFam" id="TF340710"/>
<dbReference type="PathwayCommons" id="Q6IC83"/>
<dbReference type="SignaLink" id="Q6IC83"/>
<dbReference type="BioGRID-ORCS" id="150297">
    <property type="hits" value="11 hits in 1110 CRISPR screens"/>
</dbReference>
<dbReference type="ChiTaRS" id="C22orf42">
    <property type="organism name" value="human"/>
</dbReference>
<dbReference type="GenomeRNAi" id="150297"/>
<dbReference type="Pharos" id="Q6IC83">
    <property type="development level" value="Tdark"/>
</dbReference>
<dbReference type="PRO" id="PR:Q6IC83"/>
<dbReference type="Proteomes" id="UP000005640">
    <property type="component" value="Chromosome 22"/>
</dbReference>
<dbReference type="RNAct" id="Q6IC83">
    <property type="molecule type" value="protein"/>
</dbReference>
<dbReference type="Bgee" id="ENSG00000205856">
    <property type="expression patterns" value="Expressed in sperm and 80 other cell types or tissues"/>
</dbReference>
<dbReference type="InterPro" id="IPR042865">
    <property type="entry name" value="DRICH1-like"/>
</dbReference>
<dbReference type="PANTHER" id="PTHR15880">
    <property type="entry name" value="ASPARTATE-RICH PROTEIN 1"/>
    <property type="match status" value="1"/>
</dbReference>
<dbReference type="PANTHER" id="PTHR15880:SF1">
    <property type="entry name" value="CHROMOSOME 22 OPEN READING FRAME 42"/>
    <property type="match status" value="1"/>
</dbReference>
<keyword id="KW-1185">Reference proteome</keyword>
<organism>
    <name type="scientific">Homo sapiens</name>
    <name type="common">Human</name>
    <dbReference type="NCBI Taxonomy" id="9606"/>
    <lineage>
        <taxon>Eukaryota</taxon>
        <taxon>Metazoa</taxon>
        <taxon>Chordata</taxon>
        <taxon>Craniata</taxon>
        <taxon>Vertebrata</taxon>
        <taxon>Euteleostomi</taxon>
        <taxon>Mammalia</taxon>
        <taxon>Eutheria</taxon>
        <taxon>Euarchontoglires</taxon>
        <taxon>Primates</taxon>
        <taxon>Haplorrhini</taxon>
        <taxon>Catarrhini</taxon>
        <taxon>Hominidae</taxon>
        <taxon>Homo</taxon>
    </lineage>
</organism>
<gene>
    <name type="primary">C22orf42</name>
</gene>
<reference key="1">
    <citation type="journal article" date="2004" name="Genome Biol.">
        <title>A genome annotation-driven approach to cloning the human ORFeome.</title>
        <authorList>
            <person name="Collins J.E."/>
            <person name="Wright C.L."/>
            <person name="Edwards C.A."/>
            <person name="Davis M.P."/>
            <person name="Grinham J.A."/>
            <person name="Cole C.G."/>
            <person name="Goward M.E."/>
            <person name="Aguado B."/>
            <person name="Mallya M."/>
            <person name="Mokrab Y."/>
            <person name="Huckle E.J."/>
            <person name="Beare D.M."/>
            <person name="Dunham I."/>
        </authorList>
    </citation>
    <scope>NUCLEOTIDE SEQUENCE [LARGE SCALE MRNA]</scope>
</reference>
<reference key="2">
    <citation type="journal article" date="1999" name="Nature">
        <title>The DNA sequence of human chromosome 22.</title>
        <authorList>
            <person name="Dunham I."/>
            <person name="Hunt A.R."/>
            <person name="Collins J.E."/>
            <person name="Bruskiewich R."/>
            <person name="Beare D.M."/>
            <person name="Clamp M."/>
            <person name="Smink L.J."/>
            <person name="Ainscough R."/>
            <person name="Almeida J.P."/>
            <person name="Babbage A.K."/>
            <person name="Bagguley C."/>
            <person name="Bailey J."/>
            <person name="Barlow K.F."/>
            <person name="Bates K.N."/>
            <person name="Beasley O.P."/>
            <person name="Bird C.P."/>
            <person name="Blakey S.E."/>
            <person name="Bridgeman A.M."/>
            <person name="Buck D."/>
            <person name="Burgess J."/>
            <person name="Burrill W.D."/>
            <person name="Burton J."/>
            <person name="Carder C."/>
            <person name="Carter N.P."/>
            <person name="Chen Y."/>
            <person name="Clark G."/>
            <person name="Clegg S.M."/>
            <person name="Cobley V.E."/>
            <person name="Cole C.G."/>
            <person name="Collier R.E."/>
            <person name="Connor R."/>
            <person name="Conroy D."/>
            <person name="Corby N.R."/>
            <person name="Coville G.J."/>
            <person name="Cox A.V."/>
            <person name="Davis J."/>
            <person name="Dawson E."/>
            <person name="Dhami P.D."/>
            <person name="Dockree C."/>
            <person name="Dodsworth S.J."/>
            <person name="Durbin R.M."/>
            <person name="Ellington A.G."/>
            <person name="Evans K.L."/>
            <person name="Fey J.M."/>
            <person name="Fleming K."/>
            <person name="French L."/>
            <person name="Garner A.A."/>
            <person name="Gilbert J.G.R."/>
            <person name="Goward M.E."/>
            <person name="Grafham D.V."/>
            <person name="Griffiths M.N.D."/>
            <person name="Hall C."/>
            <person name="Hall R.E."/>
            <person name="Hall-Tamlyn G."/>
            <person name="Heathcott R.W."/>
            <person name="Ho S."/>
            <person name="Holmes S."/>
            <person name="Hunt S.E."/>
            <person name="Jones M.C."/>
            <person name="Kershaw J."/>
            <person name="Kimberley A.M."/>
            <person name="King A."/>
            <person name="Laird G.K."/>
            <person name="Langford C.F."/>
            <person name="Leversha M.A."/>
            <person name="Lloyd C."/>
            <person name="Lloyd D.M."/>
            <person name="Martyn I.D."/>
            <person name="Mashreghi-Mohammadi M."/>
            <person name="Matthews L.H."/>
            <person name="Mccann O.T."/>
            <person name="Mcclay J."/>
            <person name="Mclaren S."/>
            <person name="McMurray A.A."/>
            <person name="Milne S.A."/>
            <person name="Mortimore B.J."/>
            <person name="Odell C.N."/>
            <person name="Pavitt R."/>
            <person name="Pearce A.V."/>
            <person name="Pearson D."/>
            <person name="Phillimore B.J.C.T."/>
            <person name="Phillips S.H."/>
            <person name="Plumb R.W."/>
            <person name="Ramsay H."/>
            <person name="Ramsey Y."/>
            <person name="Rogers L."/>
            <person name="Ross M.T."/>
            <person name="Scott C.E."/>
            <person name="Sehra H.K."/>
            <person name="Skuce C.D."/>
            <person name="Smalley S."/>
            <person name="Smith M.L."/>
            <person name="Soderlund C."/>
            <person name="Spragon L."/>
            <person name="Steward C.A."/>
            <person name="Sulston J.E."/>
            <person name="Swann R.M."/>
            <person name="Vaudin M."/>
            <person name="Wall M."/>
            <person name="Wallis J.M."/>
            <person name="Whiteley M.N."/>
            <person name="Willey D.L."/>
            <person name="Williams L."/>
            <person name="Williams S.A."/>
            <person name="Williamson H."/>
            <person name="Wilmer T.E."/>
            <person name="Wilming L."/>
            <person name="Wright C.L."/>
            <person name="Hubbard T."/>
            <person name="Bentley D.R."/>
            <person name="Beck S."/>
            <person name="Rogers J."/>
            <person name="Shimizu N."/>
            <person name="Minoshima S."/>
            <person name="Kawasaki K."/>
            <person name="Sasaki T."/>
            <person name="Asakawa S."/>
            <person name="Kudoh J."/>
            <person name="Shintani A."/>
            <person name="Shibuya K."/>
            <person name="Yoshizaki Y."/>
            <person name="Aoki N."/>
            <person name="Mitsuyama S."/>
            <person name="Roe B.A."/>
            <person name="Chen F."/>
            <person name="Chu L."/>
            <person name="Crabtree J."/>
            <person name="Deschamps S."/>
            <person name="Do A."/>
            <person name="Do T."/>
            <person name="Dorman A."/>
            <person name="Fang F."/>
            <person name="Fu Y."/>
            <person name="Hu P."/>
            <person name="Hua A."/>
            <person name="Kenton S."/>
            <person name="Lai H."/>
            <person name="Lao H.I."/>
            <person name="Lewis J."/>
            <person name="Lewis S."/>
            <person name="Lin S.-P."/>
            <person name="Loh P."/>
            <person name="Malaj E."/>
            <person name="Nguyen T."/>
            <person name="Pan H."/>
            <person name="Phan S."/>
            <person name="Qi S."/>
            <person name="Qian Y."/>
            <person name="Ray L."/>
            <person name="Ren Q."/>
            <person name="Shaull S."/>
            <person name="Sloan D."/>
            <person name="Song L."/>
            <person name="Wang Q."/>
            <person name="Wang Y."/>
            <person name="Wang Z."/>
            <person name="White J."/>
            <person name="Willingham D."/>
            <person name="Wu H."/>
            <person name="Yao Z."/>
            <person name="Zhan M."/>
            <person name="Zhang G."/>
            <person name="Chissoe S."/>
            <person name="Murray J."/>
            <person name="Miller N."/>
            <person name="Minx P."/>
            <person name="Fulton R."/>
            <person name="Johnson D."/>
            <person name="Bemis G."/>
            <person name="Bentley D."/>
            <person name="Bradshaw H."/>
            <person name="Bourne S."/>
            <person name="Cordes M."/>
            <person name="Du Z."/>
            <person name="Fulton L."/>
            <person name="Goela D."/>
            <person name="Graves T."/>
            <person name="Hawkins J."/>
            <person name="Hinds K."/>
            <person name="Kemp K."/>
            <person name="Latreille P."/>
            <person name="Layman D."/>
            <person name="Ozersky P."/>
            <person name="Rohlfing T."/>
            <person name="Scheet P."/>
            <person name="Walker C."/>
            <person name="Wamsley A."/>
            <person name="Wohldmann P."/>
            <person name="Pepin K."/>
            <person name="Nelson J."/>
            <person name="Korf I."/>
            <person name="Bedell J.A."/>
            <person name="Hillier L.W."/>
            <person name="Mardis E."/>
            <person name="Waterston R."/>
            <person name="Wilson R."/>
            <person name="Emanuel B.S."/>
            <person name="Shaikh T."/>
            <person name="Kurahashi H."/>
            <person name="Saitta S."/>
            <person name="Budarf M.L."/>
            <person name="McDermid H.E."/>
            <person name="Johnson A."/>
            <person name="Wong A.C.C."/>
            <person name="Morrow B.E."/>
            <person name="Edelmann L."/>
            <person name="Kim U.J."/>
            <person name="Shizuya H."/>
            <person name="Simon M.I."/>
            <person name="Dumanski J.P."/>
            <person name="Peyrard M."/>
            <person name="Kedra D."/>
            <person name="Seroussi E."/>
            <person name="Fransson I."/>
            <person name="Tapia I."/>
            <person name="Bruder C.E."/>
            <person name="O'Brien K.P."/>
            <person name="Wilkinson P."/>
            <person name="Bodenteich A."/>
            <person name="Hartman K."/>
            <person name="Hu X."/>
            <person name="Khan A.S."/>
            <person name="Lane L."/>
            <person name="Tilahun Y."/>
            <person name="Wright H."/>
        </authorList>
    </citation>
    <scope>NUCLEOTIDE SEQUENCE [LARGE SCALE GENOMIC DNA]</scope>
</reference>
<reference key="3">
    <citation type="submission" date="2005-07" db="EMBL/GenBank/DDBJ databases">
        <authorList>
            <person name="Mural R.J."/>
            <person name="Istrail S."/>
            <person name="Sutton G.G."/>
            <person name="Florea L."/>
            <person name="Halpern A.L."/>
            <person name="Mobarry C.M."/>
            <person name="Lippert R."/>
            <person name="Walenz B."/>
            <person name="Shatkay H."/>
            <person name="Dew I."/>
            <person name="Miller J.R."/>
            <person name="Flanigan M.J."/>
            <person name="Edwards N.J."/>
            <person name="Bolanos R."/>
            <person name="Fasulo D."/>
            <person name="Halldorsson B.V."/>
            <person name="Hannenhalli S."/>
            <person name="Turner R."/>
            <person name="Yooseph S."/>
            <person name="Lu F."/>
            <person name="Nusskern D.R."/>
            <person name="Shue B.C."/>
            <person name="Zheng X.H."/>
            <person name="Zhong F."/>
            <person name="Delcher A.L."/>
            <person name="Huson D.H."/>
            <person name="Kravitz S.A."/>
            <person name="Mouchard L."/>
            <person name="Reinert K."/>
            <person name="Remington K.A."/>
            <person name="Clark A.G."/>
            <person name="Waterman M.S."/>
            <person name="Eichler E.E."/>
            <person name="Adams M.D."/>
            <person name="Hunkapiller M.W."/>
            <person name="Myers E.W."/>
            <person name="Venter J.C."/>
        </authorList>
    </citation>
    <scope>NUCLEOTIDE SEQUENCE [LARGE SCALE GENOMIC DNA]</scope>
</reference>
<proteinExistence type="evidence at transcript level"/>
<protein>
    <recommendedName>
        <fullName>Uncharacterized protein C22orf42</fullName>
    </recommendedName>
</protein>
<feature type="chain" id="PRO_0000344364" description="Uncharacterized protein C22orf42">
    <location>
        <begin position="1"/>
        <end position="251"/>
    </location>
</feature>
<feature type="sequence variant" id="VAR_045606" description="In dbSNP:rs5998267.">
    <original>L</original>
    <variation>P</variation>
    <location>
        <position position="73"/>
    </location>
</feature>
<accession>Q6IC83</accession>
<accession>A4QPH5</accession>